<reference key="1">
    <citation type="journal article" date="2002" name="Nucleic Acids Res.">
        <title>Genome sequence of Shigella flexneri 2a: insights into pathogenicity through comparison with genomes of Escherichia coli K12 and O157.</title>
        <authorList>
            <person name="Jin Q."/>
            <person name="Yuan Z."/>
            <person name="Xu J."/>
            <person name="Wang Y."/>
            <person name="Shen Y."/>
            <person name="Lu W."/>
            <person name="Wang J."/>
            <person name="Liu H."/>
            <person name="Yang J."/>
            <person name="Yang F."/>
            <person name="Zhang X."/>
            <person name="Zhang J."/>
            <person name="Yang G."/>
            <person name="Wu H."/>
            <person name="Qu D."/>
            <person name="Dong J."/>
            <person name="Sun L."/>
            <person name="Xue Y."/>
            <person name="Zhao A."/>
            <person name="Gao Y."/>
            <person name="Zhu J."/>
            <person name="Kan B."/>
            <person name="Ding K."/>
            <person name="Chen S."/>
            <person name="Cheng H."/>
            <person name="Yao Z."/>
            <person name="He B."/>
            <person name="Chen R."/>
            <person name="Ma D."/>
            <person name="Qiang B."/>
            <person name="Wen Y."/>
            <person name="Hou Y."/>
            <person name="Yu J."/>
        </authorList>
    </citation>
    <scope>NUCLEOTIDE SEQUENCE [LARGE SCALE GENOMIC DNA]</scope>
    <source>
        <strain>301 / Serotype 2a</strain>
    </source>
</reference>
<reference key="2">
    <citation type="journal article" date="2003" name="Infect. Immun.">
        <title>Complete genome sequence and comparative genomics of Shigella flexneri serotype 2a strain 2457T.</title>
        <authorList>
            <person name="Wei J."/>
            <person name="Goldberg M.B."/>
            <person name="Burland V."/>
            <person name="Venkatesan M.M."/>
            <person name="Deng W."/>
            <person name="Fournier G."/>
            <person name="Mayhew G.F."/>
            <person name="Plunkett G. III"/>
            <person name="Rose D.J."/>
            <person name="Darling A."/>
            <person name="Mau B."/>
            <person name="Perna N.T."/>
            <person name="Payne S.M."/>
            <person name="Runyen-Janecky L.J."/>
            <person name="Zhou S."/>
            <person name="Schwartz D.C."/>
            <person name="Blattner F.R."/>
        </authorList>
    </citation>
    <scope>NUCLEOTIDE SEQUENCE [LARGE SCALE GENOMIC DNA]</scope>
    <source>
        <strain>ATCC 700930 / 2457T / Serotype 2a</strain>
    </source>
</reference>
<reference key="3">
    <citation type="submission" date="2009-02" db="PDB data bank">
        <title>Crystal structure of UPF0341 protein (YhiQ) from Shigella flexneri in complex with S-adenosyl homocysteine, northeast structural genomics target sfr275.</title>
        <authorList>
            <consortium name="Northeast structural genomics consortium (NESG)"/>
        </authorList>
    </citation>
    <scope>X-RAY CRYSTALLOGRAPHY (2.00 ANGSTROMS) IN COMPLEX WITH S-ADENOSYL-L-HOMOCYSTEINE</scope>
    <source>
        <strain>ATCC 700930 / 2457T / Serotype 2a</strain>
    </source>
</reference>
<sequence length="250" mass="26919">MKICLIDETGAGDGALSVLAARWGLEHDEDNLMALVLTPEHLELRKRDEPKLGGIFVDFVGGAMAHRRKFGGGRGEAVAKAVGIKGDYLPDVVDATAGLGRDAFVLASVGCRVRMLERNPVVAALLDDGLARGYADAEIGGWLQERLQLIHASSLTALTDITPRPQVVYLDPMFPHKQKSALVKKEMRVFQSLVGPDLDADGLLEPARLLATKRVVVKRPDYAPPLANVATPNAVVTKGHRFDIYAGTPV</sequence>
<gene>
    <name evidence="1" type="primary">rsmJ</name>
    <name type="synonym">yhiQ</name>
    <name type="ordered locus">SF3528</name>
    <name type="ordered locus">S4240</name>
</gene>
<keyword id="KW-0002">3D-structure</keyword>
<keyword id="KW-0963">Cytoplasm</keyword>
<keyword id="KW-0489">Methyltransferase</keyword>
<keyword id="KW-1185">Reference proteome</keyword>
<keyword id="KW-0698">rRNA processing</keyword>
<keyword id="KW-0949">S-adenosyl-L-methionine</keyword>
<keyword id="KW-0808">Transferase</keyword>
<evidence type="ECO:0000255" key="1">
    <source>
        <dbReference type="HAMAP-Rule" id="MF_01523"/>
    </source>
</evidence>
<evidence type="ECO:0000305" key="2">
    <source ref="3"/>
</evidence>
<evidence type="ECO:0007829" key="3">
    <source>
        <dbReference type="PDB" id="2OYR"/>
    </source>
</evidence>
<accession>Q7UAV7</accession>
<accession>Q83J64</accession>
<comment type="function">
    <text evidence="1">Specifically methylates the guanosine in position 1516 of 16S rRNA.</text>
</comment>
<comment type="catalytic activity">
    <reaction evidence="1">
        <text>guanosine(1516) in 16S rRNA + S-adenosyl-L-methionine = N(2)-methylguanosine(1516) in 16S rRNA + S-adenosyl-L-homocysteine + H(+)</text>
        <dbReference type="Rhea" id="RHEA:43220"/>
        <dbReference type="Rhea" id="RHEA-COMP:10412"/>
        <dbReference type="Rhea" id="RHEA-COMP:10413"/>
        <dbReference type="ChEBI" id="CHEBI:15378"/>
        <dbReference type="ChEBI" id="CHEBI:57856"/>
        <dbReference type="ChEBI" id="CHEBI:59789"/>
        <dbReference type="ChEBI" id="CHEBI:74269"/>
        <dbReference type="ChEBI" id="CHEBI:74481"/>
        <dbReference type="EC" id="2.1.1.242"/>
    </reaction>
</comment>
<comment type="subcellular location">
    <subcellularLocation>
        <location evidence="1">Cytoplasm</location>
    </subcellularLocation>
</comment>
<comment type="similarity">
    <text evidence="1">Belongs to the methyltransferase superfamily. RsmJ family.</text>
</comment>
<name>RSMJ_SHIFL</name>
<organism>
    <name type="scientific">Shigella flexneri</name>
    <dbReference type="NCBI Taxonomy" id="623"/>
    <lineage>
        <taxon>Bacteria</taxon>
        <taxon>Pseudomonadati</taxon>
        <taxon>Pseudomonadota</taxon>
        <taxon>Gammaproteobacteria</taxon>
        <taxon>Enterobacterales</taxon>
        <taxon>Enterobacteriaceae</taxon>
        <taxon>Shigella</taxon>
    </lineage>
</organism>
<protein>
    <recommendedName>
        <fullName evidence="1">Ribosomal RNA small subunit methyltransferase J</fullName>
        <ecNumber evidence="1">2.1.1.242</ecNumber>
    </recommendedName>
    <alternativeName>
        <fullName evidence="1">16S rRNA m2G1516 methyltransferase</fullName>
    </alternativeName>
    <alternativeName>
        <fullName evidence="1">rRNA (guanine-N(2)-)-methyltransferase</fullName>
    </alternativeName>
</protein>
<feature type="chain" id="PRO_0000212093" description="Ribosomal RNA small subunit methyltransferase J">
    <location>
        <begin position="1"/>
        <end position="250"/>
    </location>
</feature>
<feature type="binding site" evidence="2">
    <location>
        <begin position="101"/>
        <end position="102"/>
    </location>
    <ligand>
        <name>S-adenosyl-L-methionine</name>
        <dbReference type="ChEBI" id="CHEBI:59789"/>
    </ligand>
</feature>
<feature type="binding site" evidence="2">
    <location>
        <begin position="117"/>
        <end position="118"/>
    </location>
    <ligand>
        <name>S-adenosyl-L-methionine</name>
        <dbReference type="ChEBI" id="CHEBI:59789"/>
    </ligand>
</feature>
<feature type="binding site" evidence="2">
    <location>
        <begin position="153"/>
        <end position="154"/>
    </location>
    <ligand>
        <name>S-adenosyl-L-methionine</name>
        <dbReference type="ChEBI" id="CHEBI:59789"/>
    </ligand>
</feature>
<feature type="binding site" evidence="2">
    <location>
        <position position="171"/>
    </location>
    <ligand>
        <name>S-adenosyl-L-methionine</name>
        <dbReference type="ChEBI" id="CHEBI:59789"/>
    </ligand>
</feature>
<feature type="strand" evidence="3">
    <location>
        <begin position="2"/>
        <end position="7"/>
    </location>
</feature>
<feature type="helix" evidence="3">
    <location>
        <begin position="15"/>
        <end position="23"/>
    </location>
</feature>
<feature type="strand" evidence="3">
    <location>
        <begin position="32"/>
        <end position="37"/>
    </location>
</feature>
<feature type="strand" evidence="3">
    <location>
        <begin position="42"/>
        <end position="46"/>
    </location>
</feature>
<feature type="helix" evidence="3">
    <location>
        <begin position="50"/>
        <end position="52"/>
    </location>
</feature>
<feature type="strand" evidence="3">
    <location>
        <begin position="59"/>
        <end position="61"/>
    </location>
</feature>
<feature type="helix" evidence="3">
    <location>
        <begin position="62"/>
        <end position="70"/>
    </location>
</feature>
<feature type="helix" evidence="3">
    <location>
        <begin position="73"/>
        <end position="75"/>
    </location>
</feature>
<feature type="helix" evidence="3">
    <location>
        <begin position="77"/>
        <end position="81"/>
    </location>
</feature>
<feature type="strand" evidence="3">
    <location>
        <begin position="92"/>
        <end position="94"/>
    </location>
</feature>
<feature type="helix" evidence="3">
    <location>
        <begin position="101"/>
        <end position="109"/>
    </location>
</feature>
<feature type="strand" evidence="3">
    <location>
        <begin position="113"/>
        <end position="117"/>
    </location>
</feature>
<feature type="helix" evidence="3">
    <location>
        <begin position="120"/>
        <end position="135"/>
    </location>
</feature>
<feature type="turn" evidence="3">
    <location>
        <begin position="137"/>
        <end position="139"/>
    </location>
</feature>
<feature type="helix" evidence="3">
    <location>
        <begin position="140"/>
        <end position="146"/>
    </location>
</feature>
<feature type="strand" evidence="3">
    <location>
        <begin position="147"/>
        <end position="152"/>
    </location>
</feature>
<feature type="helix" evidence="3">
    <location>
        <begin position="154"/>
        <end position="157"/>
    </location>
</feature>
<feature type="strand" evidence="3">
    <location>
        <begin position="166"/>
        <end position="170"/>
    </location>
</feature>
<feature type="helix" evidence="3">
    <location>
        <begin position="185"/>
        <end position="193"/>
    </location>
</feature>
<feature type="helix" evidence="3">
    <location>
        <begin position="200"/>
        <end position="203"/>
    </location>
</feature>
<feature type="helix" evidence="3">
    <location>
        <begin position="204"/>
        <end position="210"/>
    </location>
</feature>
<feature type="strand" evidence="3">
    <location>
        <begin position="212"/>
        <end position="220"/>
    </location>
</feature>
<feature type="helix" evidence="3">
    <location>
        <begin position="226"/>
        <end position="228"/>
    </location>
</feature>
<feature type="strand" evidence="3">
    <location>
        <begin position="232"/>
        <end position="236"/>
    </location>
</feature>
<feature type="strand" evidence="3">
    <location>
        <begin position="238"/>
        <end position="246"/>
    </location>
</feature>
<dbReference type="EC" id="2.1.1.242" evidence="1"/>
<dbReference type="EMBL" id="AE005674">
    <property type="protein sequence ID" value="AAN44984.2"/>
    <property type="molecule type" value="Genomic_DNA"/>
</dbReference>
<dbReference type="EMBL" id="AE014073">
    <property type="protein sequence ID" value="AAP19202.1"/>
    <property type="molecule type" value="Genomic_DNA"/>
</dbReference>
<dbReference type="RefSeq" id="NP_709277.2">
    <property type="nucleotide sequence ID" value="NC_004337.2"/>
</dbReference>
<dbReference type="RefSeq" id="WP_000686608.1">
    <property type="nucleotide sequence ID" value="NZ_WPGW01000101.1"/>
</dbReference>
<dbReference type="PDB" id="2OYR">
    <property type="method" value="X-ray"/>
    <property type="resolution" value="2.00 A"/>
    <property type="chains" value="A=1-250"/>
</dbReference>
<dbReference type="PDBsum" id="2OYR"/>
<dbReference type="SMR" id="Q7UAV7"/>
<dbReference type="STRING" id="198214.SF3528"/>
<dbReference type="PaxDb" id="198214-SF3528"/>
<dbReference type="DNASU" id="1080448"/>
<dbReference type="GeneID" id="1026390"/>
<dbReference type="GeneID" id="93778496"/>
<dbReference type="KEGG" id="sfl:SF3528"/>
<dbReference type="KEGG" id="sfx:S4240"/>
<dbReference type="PATRIC" id="fig|198214.7.peg.4153"/>
<dbReference type="HOGENOM" id="CLU_076324_0_0_6"/>
<dbReference type="EvolutionaryTrace" id="Q7UAV7"/>
<dbReference type="Proteomes" id="UP000001006">
    <property type="component" value="Chromosome"/>
</dbReference>
<dbReference type="Proteomes" id="UP000002673">
    <property type="component" value="Chromosome"/>
</dbReference>
<dbReference type="GO" id="GO:0005737">
    <property type="term" value="C:cytoplasm"/>
    <property type="evidence" value="ECO:0007669"/>
    <property type="project" value="UniProtKB-SubCell"/>
</dbReference>
<dbReference type="GO" id="GO:0008990">
    <property type="term" value="F:rRNA (guanine-N2-)-methyltransferase activity"/>
    <property type="evidence" value="ECO:0007669"/>
    <property type="project" value="UniProtKB-UniRule"/>
</dbReference>
<dbReference type="CDD" id="cd02440">
    <property type="entry name" value="AdoMet_MTases"/>
    <property type="match status" value="1"/>
</dbReference>
<dbReference type="FunFam" id="3.40.1630.10:FF:000001">
    <property type="entry name" value="Ribosomal RNA small subunit methyltransferase J"/>
    <property type="match status" value="1"/>
</dbReference>
<dbReference type="FunFam" id="3.40.50.150:FF:000072">
    <property type="entry name" value="Ribosomal RNA small subunit methyltransferase J"/>
    <property type="match status" value="1"/>
</dbReference>
<dbReference type="Gene3D" id="3.40.50.150">
    <property type="entry name" value="Vaccinia Virus protein VP39"/>
    <property type="match status" value="1"/>
</dbReference>
<dbReference type="Gene3D" id="3.40.1630.10">
    <property type="entry name" value="YhiQ-like domain"/>
    <property type="match status" value="1"/>
</dbReference>
<dbReference type="HAMAP" id="MF_01523">
    <property type="entry name" value="16SrRNA_methyltr_J"/>
    <property type="match status" value="1"/>
</dbReference>
<dbReference type="InterPro" id="IPR007536">
    <property type="entry name" value="16SrRNA_methylTrfase_J"/>
</dbReference>
<dbReference type="InterPro" id="IPR029063">
    <property type="entry name" value="SAM-dependent_MTases_sf"/>
</dbReference>
<dbReference type="NCBIfam" id="NF008012">
    <property type="entry name" value="PRK10742.1"/>
    <property type="match status" value="1"/>
</dbReference>
<dbReference type="PANTHER" id="PTHR36112">
    <property type="entry name" value="RIBOSOMAL RNA SMALL SUBUNIT METHYLTRANSFERASE J"/>
    <property type="match status" value="1"/>
</dbReference>
<dbReference type="PANTHER" id="PTHR36112:SF1">
    <property type="entry name" value="RIBOSOMAL RNA SMALL SUBUNIT METHYLTRANSFERASE J"/>
    <property type="match status" value="1"/>
</dbReference>
<dbReference type="Pfam" id="PF04445">
    <property type="entry name" value="SAM_MT"/>
    <property type="match status" value="1"/>
</dbReference>
<dbReference type="SUPFAM" id="SSF53335">
    <property type="entry name" value="S-adenosyl-L-methionine-dependent methyltransferases"/>
    <property type="match status" value="1"/>
</dbReference>
<proteinExistence type="evidence at protein level"/>